<accession>P0A8S6</accession>
<accession>P37632</accession>
<protein>
    <recommendedName>
        <fullName>Universal stress protein B</fullName>
    </recommendedName>
</protein>
<reference key="1">
    <citation type="journal article" date="2002" name="Proc. Natl. Acad. Sci. U.S.A.">
        <title>Extensive mosaic structure revealed by the complete genome sequence of uropathogenic Escherichia coli.</title>
        <authorList>
            <person name="Welch R.A."/>
            <person name="Burland V."/>
            <person name="Plunkett G. III"/>
            <person name="Redford P."/>
            <person name="Roesch P."/>
            <person name="Rasko D."/>
            <person name="Buckles E.L."/>
            <person name="Liou S.-R."/>
            <person name="Boutin A."/>
            <person name="Hackett J."/>
            <person name="Stroud D."/>
            <person name="Mayhew G.F."/>
            <person name="Rose D.J."/>
            <person name="Zhou S."/>
            <person name="Schwartz D.C."/>
            <person name="Perna N.T."/>
            <person name="Mobley H.L.T."/>
            <person name="Donnenberg M.S."/>
            <person name="Blattner F.R."/>
        </authorList>
    </citation>
    <scope>NUCLEOTIDE SEQUENCE [LARGE SCALE GENOMIC DNA]</scope>
    <source>
        <strain>CFT073 / ATCC 700928 / UPEC</strain>
    </source>
</reference>
<sequence length="111" mass="13027">MISTVALFWALCVVCIVNMARYFSSLRALLVVLRNCDPLLYQYVDGGGFFTSHGQPNKQVRLVWYIYAQRYRDHHDDEFIRRCERVRRQFILTSALCGLVVVSLIALMIWH</sequence>
<proteinExistence type="inferred from homology"/>
<organism>
    <name type="scientific">Escherichia coli O6:H1 (strain CFT073 / ATCC 700928 / UPEC)</name>
    <dbReference type="NCBI Taxonomy" id="199310"/>
    <lineage>
        <taxon>Bacteria</taxon>
        <taxon>Pseudomonadati</taxon>
        <taxon>Pseudomonadota</taxon>
        <taxon>Gammaproteobacteria</taxon>
        <taxon>Enterobacterales</taxon>
        <taxon>Enterobacteriaceae</taxon>
        <taxon>Escherichia</taxon>
    </lineage>
</organism>
<evidence type="ECO:0000250" key="1"/>
<evidence type="ECO:0000255" key="2"/>
<evidence type="ECO:0000305" key="3"/>
<feature type="chain" id="PRO_0000212041" description="Universal stress protein B">
    <location>
        <begin position="1"/>
        <end position="111"/>
    </location>
</feature>
<feature type="transmembrane region" description="Helical" evidence="2">
    <location>
        <begin position="1"/>
        <end position="21"/>
    </location>
</feature>
<feature type="topological domain" description="Cytoplasmic" evidence="2">
    <location>
        <begin position="22"/>
        <end position="89"/>
    </location>
</feature>
<feature type="transmembrane region" description="Helical" evidence="2">
    <location>
        <begin position="90"/>
        <end position="110"/>
    </location>
</feature>
<feature type="topological domain" description="Periplasmic" evidence="2">
    <location>
        <position position="111"/>
    </location>
</feature>
<name>USPB_ECOL6</name>
<comment type="subcellular location">
    <subcellularLocation>
        <location evidence="1">Cell inner membrane</location>
        <topology evidence="1">Multi-pass membrane protein</topology>
    </subcellularLocation>
</comment>
<comment type="similarity">
    <text evidence="3">Belongs to the universal stress protein B family.</text>
</comment>
<dbReference type="EMBL" id="AE014075">
    <property type="protein sequence ID" value="AAN82728.1"/>
    <property type="molecule type" value="Genomic_DNA"/>
</dbReference>
<dbReference type="RefSeq" id="WP_000626187.1">
    <property type="nucleotide sequence ID" value="NZ_CP051263.1"/>
</dbReference>
<dbReference type="SMR" id="P0A8S6"/>
<dbReference type="STRING" id="199310.c4292"/>
<dbReference type="GeneID" id="93778499"/>
<dbReference type="KEGG" id="ecc:c4292"/>
<dbReference type="eggNOG" id="ENOG502ZP3V">
    <property type="taxonomic scope" value="Bacteria"/>
</dbReference>
<dbReference type="HOGENOM" id="CLU_151816_0_0_6"/>
<dbReference type="BioCyc" id="ECOL199310:C4292-MONOMER"/>
<dbReference type="Proteomes" id="UP000001410">
    <property type="component" value="Chromosome"/>
</dbReference>
<dbReference type="GO" id="GO:0005886">
    <property type="term" value="C:plasma membrane"/>
    <property type="evidence" value="ECO:0007669"/>
    <property type="project" value="UniProtKB-SubCell"/>
</dbReference>
<dbReference type="HAMAP" id="MF_01088">
    <property type="entry name" value="UspB"/>
    <property type="match status" value="1"/>
</dbReference>
<dbReference type="InterPro" id="IPR019598">
    <property type="entry name" value="Universal_stress_protein_B"/>
</dbReference>
<dbReference type="NCBIfam" id="NF003435">
    <property type="entry name" value="PRK04960.1"/>
    <property type="match status" value="1"/>
</dbReference>
<dbReference type="Pfam" id="PF10625">
    <property type="entry name" value="UspB"/>
    <property type="match status" value="1"/>
</dbReference>
<keyword id="KW-0997">Cell inner membrane</keyword>
<keyword id="KW-1003">Cell membrane</keyword>
<keyword id="KW-0472">Membrane</keyword>
<keyword id="KW-1185">Reference proteome</keyword>
<keyword id="KW-0812">Transmembrane</keyword>
<keyword id="KW-1133">Transmembrane helix</keyword>
<gene>
    <name type="primary">uspB</name>
    <name type="ordered locus">c4292</name>
</gene>